<dbReference type="EMBL" id="U09402">
    <property type="protein sequence ID" value="AAA61565.1"/>
    <property type="molecule type" value="mRNA"/>
</dbReference>
<dbReference type="EMBL" id="L46865">
    <property type="protein sequence ID" value="AAB02099.1"/>
    <property type="molecule type" value="mRNA"/>
</dbReference>
<dbReference type="EMBL" id="U56839">
    <property type="protein sequence ID" value="AAC00048.1"/>
    <property type="molecule type" value="mRNA"/>
</dbReference>
<dbReference type="EMBL" id="BC061754">
    <property type="protein sequence ID" value="AAH61754.1"/>
    <property type="molecule type" value="mRNA"/>
</dbReference>
<dbReference type="RefSeq" id="NP_058951.1">
    <property type="nucleotide sequence ID" value="NM_017255.1"/>
</dbReference>
<dbReference type="SMR" id="P41232"/>
<dbReference type="CORUM" id="P41232"/>
<dbReference type="FunCoup" id="P41232">
    <property type="interactions" value="161"/>
</dbReference>
<dbReference type="STRING" id="10116.ENSRNOP00000026115"/>
<dbReference type="BindingDB" id="P41232"/>
<dbReference type="ChEMBL" id="CHEMBL4419"/>
<dbReference type="GlyCosmos" id="P41232">
    <property type="glycosylation" value="2 sites, No reported glycans"/>
</dbReference>
<dbReference type="GlyGen" id="P41232">
    <property type="glycosylation" value="3 sites"/>
</dbReference>
<dbReference type="iPTMnet" id="P41232"/>
<dbReference type="PhosphoSitePlus" id="P41232"/>
<dbReference type="PaxDb" id="10116-ENSRNOP00000026115"/>
<dbReference type="GeneID" id="29597"/>
<dbReference type="KEGG" id="rno:29597"/>
<dbReference type="UCSC" id="RGD:62088">
    <property type="organism name" value="rat"/>
</dbReference>
<dbReference type="AGR" id="RGD:62088"/>
<dbReference type="CTD" id="5029"/>
<dbReference type="RGD" id="62088">
    <property type="gene designation" value="P2ry2"/>
</dbReference>
<dbReference type="eggNOG" id="ENOG502QSTF">
    <property type="taxonomic scope" value="Eukaryota"/>
</dbReference>
<dbReference type="InParanoid" id="P41232"/>
<dbReference type="OrthoDB" id="10018446at2759"/>
<dbReference type="PhylomeDB" id="P41232"/>
<dbReference type="Reactome" id="R-RNO-416476">
    <property type="pathway name" value="G alpha (q) signalling events"/>
</dbReference>
<dbReference type="Reactome" id="R-RNO-417957">
    <property type="pathway name" value="P2Y receptors"/>
</dbReference>
<dbReference type="Reactome" id="R-RNO-5683826">
    <property type="pathway name" value="Surfactant metabolism"/>
</dbReference>
<dbReference type="Reactome" id="R-RNO-9856530">
    <property type="pathway name" value="High laminar flow shear stress activates signaling by PIEZO1 and PECAM1:CDH5:KDR in endothelial cells"/>
</dbReference>
<dbReference type="PRO" id="PR:P41232"/>
<dbReference type="Proteomes" id="UP000002494">
    <property type="component" value="Unplaced"/>
</dbReference>
<dbReference type="GO" id="GO:0016324">
    <property type="term" value="C:apical plasma membrane"/>
    <property type="evidence" value="ECO:0000314"/>
    <property type="project" value="RGD"/>
</dbReference>
<dbReference type="GO" id="GO:0016323">
    <property type="term" value="C:basolateral plasma membrane"/>
    <property type="evidence" value="ECO:0000314"/>
    <property type="project" value="RGD"/>
</dbReference>
<dbReference type="GO" id="GO:0005769">
    <property type="term" value="C:early endosome"/>
    <property type="evidence" value="ECO:0000314"/>
    <property type="project" value="RGD"/>
</dbReference>
<dbReference type="GO" id="GO:0098978">
    <property type="term" value="C:glutamatergic synapse"/>
    <property type="evidence" value="ECO:0000314"/>
    <property type="project" value="SynGO"/>
</dbReference>
<dbReference type="GO" id="GO:0005886">
    <property type="term" value="C:plasma membrane"/>
    <property type="evidence" value="ECO:0000318"/>
    <property type="project" value="GO_Central"/>
</dbReference>
<dbReference type="GO" id="GO:0048787">
    <property type="term" value="C:presynaptic active zone membrane"/>
    <property type="evidence" value="ECO:0000314"/>
    <property type="project" value="SynGO"/>
</dbReference>
<dbReference type="GO" id="GO:0031686">
    <property type="term" value="F:A1 adenosine receptor binding"/>
    <property type="evidence" value="ECO:0000353"/>
    <property type="project" value="BHF-UCL"/>
</dbReference>
<dbReference type="GO" id="GO:0005524">
    <property type="term" value="F:ATP binding"/>
    <property type="evidence" value="ECO:0000314"/>
    <property type="project" value="RGD"/>
</dbReference>
<dbReference type="GO" id="GO:0045028">
    <property type="term" value="F:G protein-coupled purinergic nucleotide receptor activity"/>
    <property type="evidence" value="ECO:0000304"/>
    <property type="project" value="RGD"/>
</dbReference>
<dbReference type="GO" id="GO:0045030">
    <property type="term" value="F:G protein-coupled UTP receptor activity"/>
    <property type="evidence" value="ECO:0000314"/>
    <property type="project" value="RGD"/>
</dbReference>
<dbReference type="GO" id="GO:0097746">
    <property type="term" value="P:blood vessel diameter maintenance"/>
    <property type="evidence" value="ECO:0000314"/>
    <property type="project" value="RGD"/>
</dbReference>
<dbReference type="GO" id="GO:0071347">
    <property type="term" value="P:cellular response to interleukin-1"/>
    <property type="evidence" value="ECO:0000270"/>
    <property type="project" value="RGD"/>
</dbReference>
<dbReference type="GO" id="GO:0071222">
    <property type="term" value="P:cellular response to lipopolysaccharide"/>
    <property type="evidence" value="ECO:0000270"/>
    <property type="project" value="RGD"/>
</dbReference>
<dbReference type="GO" id="GO:0071415">
    <property type="term" value="P:cellular response to purine-containing compound"/>
    <property type="evidence" value="ECO:0000270"/>
    <property type="project" value="RGD"/>
</dbReference>
<dbReference type="GO" id="GO:0051649">
    <property type="term" value="P:establishment of localization in cell"/>
    <property type="evidence" value="ECO:0000266"/>
    <property type="project" value="RGD"/>
</dbReference>
<dbReference type="GO" id="GO:0035589">
    <property type="term" value="P:G protein-coupled purinergic nucleotide receptor signaling pathway"/>
    <property type="evidence" value="ECO:0000314"/>
    <property type="project" value="BHF-UCL"/>
</dbReference>
<dbReference type="GO" id="GO:0007186">
    <property type="term" value="P:G protein-coupled receptor signaling pathway"/>
    <property type="evidence" value="ECO:0000318"/>
    <property type="project" value="GO_Central"/>
</dbReference>
<dbReference type="GO" id="GO:0001701">
    <property type="term" value="P:in utero embryonic development"/>
    <property type="evidence" value="ECO:0000270"/>
    <property type="project" value="RGD"/>
</dbReference>
<dbReference type="GO" id="GO:0070254">
    <property type="term" value="P:mucus secretion"/>
    <property type="evidence" value="ECO:0000266"/>
    <property type="project" value="RGD"/>
</dbReference>
<dbReference type="GO" id="GO:0030279">
    <property type="term" value="P:negative regulation of ossification"/>
    <property type="evidence" value="ECO:0000314"/>
    <property type="project" value="RGD"/>
</dbReference>
<dbReference type="GO" id="GO:0007200">
    <property type="term" value="P:phospholipase C-activating G protein-coupled receptor signaling pathway"/>
    <property type="evidence" value="ECO:0007669"/>
    <property type="project" value="InterPro"/>
</dbReference>
<dbReference type="GO" id="GO:0032722">
    <property type="term" value="P:positive regulation of chemokine production"/>
    <property type="evidence" value="ECO:0000314"/>
    <property type="project" value="RGD"/>
</dbReference>
<dbReference type="GO" id="GO:0007204">
    <property type="term" value="P:positive regulation of cytosolic calcium ion concentration"/>
    <property type="evidence" value="ECO:0000315"/>
    <property type="project" value="RGD"/>
</dbReference>
<dbReference type="GO" id="GO:0070257">
    <property type="term" value="P:positive regulation of mucus secretion"/>
    <property type="evidence" value="ECO:0000266"/>
    <property type="project" value="RGD"/>
</dbReference>
<dbReference type="GO" id="GO:0010976">
    <property type="term" value="P:positive regulation of neuron projection development"/>
    <property type="evidence" value="ECO:0000314"/>
    <property type="project" value="RGD"/>
</dbReference>
<dbReference type="GO" id="GO:0060406">
    <property type="term" value="P:positive regulation of penile erection"/>
    <property type="evidence" value="ECO:0000314"/>
    <property type="project" value="RGD"/>
</dbReference>
<dbReference type="GO" id="GO:0032308">
    <property type="term" value="P:positive regulation of prostaglandin secretion"/>
    <property type="evidence" value="ECO:0000314"/>
    <property type="project" value="RGD"/>
</dbReference>
<dbReference type="GO" id="GO:0014911">
    <property type="term" value="P:positive regulation of smooth muscle cell migration"/>
    <property type="evidence" value="ECO:0000315"/>
    <property type="project" value="RGD"/>
</dbReference>
<dbReference type="GO" id="GO:0099509">
    <property type="term" value="P:regulation of presynaptic cytosolic calcium ion concentration"/>
    <property type="evidence" value="ECO:0000314"/>
    <property type="project" value="SynGO"/>
</dbReference>
<dbReference type="GO" id="GO:2000300">
    <property type="term" value="P:regulation of synaptic vesicle exocytosis"/>
    <property type="evidence" value="ECO:0000314"/>
    <property type="project" value="SynGO"/>
</dbReference>
<dbReference type="GO" id="GO:0070848">
    <property type="term" value="P:response to growth factor"/>
    <property type="evidence" value="ECO:0000270"/>
    <property type="project" value="RGD"/>
</dbReference>
<dbReference type="CDD" id="cd15373">
    <property type="entry name" value="7tmA_P2Y2"/>
    <property type="match status" value="1"/>
</dbReference>
<dbReference type="FunFam" id="1.20.1070.10:FF:000017">
    <property type="entry name" value="lysophosphatidic acid receptor 4"/>
    <property type="match status" value="1"/>
</dbReference>
<dbReference type="Gene3D" id="1.20.1070.10">
    <property type="entry name" value="Rhodopsin 7-helix transmembrane proteins"/>
    <property type="match status" value="1"/>
</dbReference>
<dbReference type="InterPro" id="IPR000276">
    <property type="entry name" value="GPCR_Rhodpsn"/>
</dbReference>
<dbReference type="InterPro" id="IPR017452">
    <property type="entry name" value="GPCR_Rhodpsn_7TM"/>
</dbReference>
<dbReference type="InterPro" id="IPR000356">
    <property type="entry name" value="P2Y2_rcpt"/>
</dbReference>
<dbReference type="PANTHER" id="PTHR24231:SF17">
    <property type="entry name" value="P2Y PURINOCEPTOR 2"/>
    <property type="match status" value="1"/>
</dbReference>
<dbReference type="PANTHER" id="PTHR24231">
    <property type="entry name" value="PURINOCEPTOR-RELATED G-PROTEIN COUPLED RECEPTOR"/>
    <property type="match status" value="1"/>
</dbReference>
<dbReference type="Pfam" id="PF00001">
    <property type="entry name" value="7tm_1"/>
    <property type="match status" value="1"/>
</dbReference>
<dbReference type="PRINTS" id="PR00237">
    <property type="entry name" value="GPCRRHODOPSN"/>
</dbReference>
<dbReference type="PRINTS" id="PR00594">
    <property type="entry name" value="P2Y2PRNOCPTR"/>
</dbReference>
<dbReference type="PRINTS" id="PR01157">
    <property type="entry name" value="P2YPURNOCPTR"/>
</dbReference>
<dbReference type="SUPFAM" id="SSF81321">
    <property type="entry name" value="Family A G protein-coupled receptor-like"/>
    <property type="match status" value="1"/>
</dbReference>
<dbReference type="PROSITE" id="PS00237">
    <property type="entry name" value="G_PROTEIN_RECEP_F1_1"/>
    <property type="match status" value="1"/>
</dbReference>
<dbReference type="PROSITE" id="PS50262">
    <property type="entry name" value="G_PROTEIN_RECEP_F1_2"/>
    <property type="match status" value="1"/>
</dbReference>
<gene>
    <name type="primary">P2ry2</name>
    <name type="synonym">P2ru1</name>
</gene>
<comment type="function">
    <text>Receptor for ATP and UTP coupled to G-proteins that activate a phosphatidylinositol-calcium second messenger system. The affinity range is UTP = ATP &gt; ATP-gamma-S &gt;&gt; 2-methylthio-ATP = ADP.</text>
</comment>
<comment type="subcellular location">
    <subcellularLocation>
        <location>Cell membrane</location>
        <topology>Multi-pass membrane protein</topology>
    </subcellularLocation>
</comment>
<comment type="similarity">
    <text evidence="2">Belongs to the G-protein coupled receptor 1 family.</text>
</comment>
<proteinExistence type="evidence at transcript level"/>
<evidence type="ECO:0000255" key="1"/>
<evidence type="ECO:0000255" key="2">
    <source>
        <dbReference type="PROSITE-ProRule" id="PRU00521"/>
    </source>
</evidence>
<evidence type="ECO:0000256" key="3">
    <source>
        <dbReference type="SAM" id="MobiDB-lite"/>
    </source>
</evidence>
<evidence type="ECO:0000305" key="4"/>
<sequence>MAAGLDSWNSTINGTWEGDELGYKCRFNEDFKYVLLPVSYGVVCVLGLCLNVVALYIFLCRLKTWNASTTYMFHLAVSDSLYAASLPLLVYYYAQGDHWPFSTVLCKLVRFLFYTNLYCSILFLTCISVHRCLGVLRPLHSLSWGHARYARRVAAVVWVLVLACQAPVLYFVTTSVRGTRITCHDTSARELFSHFVAYSSVMLGLLFAVPFSIILVCYVLMARRLLKPAYGTTGLPRAKRKSVRTIALVLAVFALCFLPFHVTRTLYYSFRSLDLSCHTLNAINMAYKITRPLASANSCLDPVLYFLAGQRLVRFARDAKPATEPTPSPQARRKLGLHRPNRTDTVRKDLSISSDDSRRTESTPAGSETKDIRL</sequence>
<accession>P41232</accession>
<keyword id="KW-1003">Cell membrane</keyword>
<keyword id="KW-1015">Disulfide bond</keyword>
<keyword id="KW-0297">G-protein coupled receptor</keyword>
<keyword id="KW-0325">Glycoprotein</keyword>
<keyword id="KW-0472">Membrane</keyword>
<keyword id="KW-0675">Receptor</keyword>
<keyword id="KW-1185">Reference proteome</keyword>
<keyword id="KW-0807">Transducer</keyword>
<keyword id="KW-0812">Transmembrane</keyword>
<keyword id="KW-1133">Transmembrane helix</keyword>
<organism>
    <name type="scientific">Rattus norvegicus</name>
    <name type="common">Rat</name>
    <dbReference type="NCBI Taxonomy" id="10116"/>
    <lineage>
        <taxon>Eukaryota</taxon>
        <taxon>Metazoa</taxon>
        <taxon>Chordata</taxon>
        <taxon>Craniata</taxon>
        <taxon>Vertebrata</taxon>
        <taxon>Euteleostomi</taxon>
        <taxon>Mammalia</taxon>
        <taxon>Eutheria</taxon>
        <taxon>Euarchontoglires</taxon>
        <taxon>Glires</taxon>
        <taxon>Rodentia</taxon>
        <taxon>Myomorpha</taxon>
        <taxon>Muroidea</taxon>
        <taxon>Muridae</taxon>
        <taxon>Murinae</taxon>
        <taxon>Rattus</taxon>
    </lineage>
</organism>
<name>P2RY2_RAT</name>
<feature type="chain" id="PRO_0000070016" description="P2Y purinoceptor 2">
    <location>
        <begin position="1"/>
        <end position="374"/>
    </location>
</feature>
<feature type="topological domain" description="Extracellular" evidence="1">
    <location>
        <begin position="1"/>
        <end position="32"/>
    </location>
</feature>
<feature type="transmembrane region" description="Helical; Name=1" evidence="1">
    <location>
        <begin position="33"/>
        <end position="59"/>
    </location>
</feature>
<feature type="topological domain" description="Cytoplasmic" evidence="1">
    <location>
        <begin position="60"/>
        <end position="70"/>
    </location>
</feature>
<feature type="transmembrane region" description="Helical; Name=2" evidence="1">
    <location>
        <begin position="71"/>
        <end position="93"/>
    </location>
</feature>
<feature type="topological domain" description="Extracellular" evidence="1">
    <location>
        <begin position="94"/>
        <end position="110"/>
    </location>
</feature>
<feature type="transmembrane region" description="Helical; Name=3" evidence="1">
    <location>
        <begin position="111"/>
        <end position="129"/>
    </location>
</feature>
<feature type="topological domain" description="Cytoplasmic" evidence="1">
    <location>
        <begin position="130"/>
        <end position="152"/>
    </location>
</feature>
<feature type="transmembrane region" description="Helical; Name=4" evidence="1">
    <location>
        <begin position="153"/>
        <end position="172"/>
    </location>
</feature>
<feature type="topological domain" description="Extracellular" evidence="1">
    <location>
        <begin position="173"/>
        <end position="194"/>
    </location>
</feature>
<feature type="transmembrane region" description="Helical; Name=5" evidence="1">
    <location>
        <begin position="195"/>
        <end position="220"/>
    </location>
</feature>
<feature type="topological domain" description="Cytoplasmic" evidence="1">
    <location>
        <begin position="221"/>
        <end position="245"/>
    </location>
</feature>
<feature type="transmembrane region" description="Helical; Name=6" evidence="1">
    <location>
        <begin position="246"/>
        <end position="268"/>
    </location>
</feature>
<feature type="topological domain" description="Extracellular" evidence="1">
    <location>
        <begin position="269"/>
        <end position="286"/>
    </location>
</feature>
<feature type="transmembrane region" description="Helical; Name=7" evidence="1">
    <location>
        <begin position="287"/>
        <end position="308"/>
    </location>
</feature>
<feature type="topological domain" description="Cytoplasmic" evidence="1">
    <location>
        <begin position="309"/>
        <end position="374"/>
    </location>
</feature>
<feature type="region of interest" description="Disordered" evidence="3">
    <location>
        <begin position="318"/>
        <end position="374"/>
    </location>
</feature>
<feature type="compositionally biased region" description="Basic residues" evidence="3">
    <location>
        <begin position="331"/>
        <end position="340"/>
    </location>
</feature>
<feature type="compositionally biased region" description="Basic and acidic residues" evidence="3">
    <location>
        <begin position="341"/>
        <end position="361"/>
    </location>
</feature>
<feature type="glycosylation site" description="N-linked (GlcNAc...) asparagine" evidence="1">
    <location>
        <position position="9"/>
    </location>
</feature>
<feature type="glycosylation site" description="N-linked (GlcNAc...) asparagine" evidence="1">
    <location>
        <position position="13"/>
    </location>
</feature>
<feature type="disulfide bond" evidence="2">
    <location>
        <begin position="106"/>
        <end position="183"/>
    </location>
</feature>
<feature type="sequence conflict" description="In Ref. 1; AAA61565." evidence="4" ref="1">
    <original>C</original>
    <variation>S</variation>
    <location>
        <position position="132"/>
    </location>
</feature>
<feature type="sequence conflict" description="In Ref. 1; AAA61565." evidence="4" ref="1">
    <original>S</original>
    <variation>R</variation>
    <location>
        <position position="143"/>
    </location>
</feature>
<feature type="sequence conflict" description="In Ref. 1; AAA61565." evidence="4" ref="1">
    <original>A</original>
    <variation>T</variation>
    <location>
        <position position="166"/>
    </location>
</feature>
<feature type="sequence conflict" description="In Ref. 1; AAA61565." evidence="4" ref="1">
    <original>A</original>
    <variation>D</variation>
    <location>
        <position position="188"/>
    </location>
</feature>
<protein>
    <recommendedName>
        <fullName>P2Y purinoceptor 2</fullName>
        <shortName>P2Y2</shortName>
    </recommendedName>
    <alternativeName>
        <fullName>ATP receptor</fullName>
    </alternativeName>
    <alternativeName>
        <fullName>P2U purinoceptor 1</fullName>
        <shortName>P2U1</shortName>
    </alternativeName>
    <alternativeName>
        <fullName>Purinergic receptor</fullName>
    </alternativeName>
</protein>
<reference key="1">
    <citation type="journal article" date="1995" name="Am. J. Respir. Cell Mol. Biol.">
        <title>Cloning and expression of the alveolar type II cell P2u-purinergic receptor.</title>
        <authorList>
            <person name="Rice W.R."/>
            <person name="Burton F.M."/>
            <person name="Fiedeldey D.T."/>
        </authorList>
    </citation>
    <scope>NUCLEOTIDE SEQUENCE [MRNA]</scope>
</reference>
<reference key="2">
    <citation type="submission" date="1995-08" db="EMBL/GenBank/DDBJ databases">
        <authorList>
            <person name="Chen Z.P."/>
            <person name="Krull N."/>
            <person name="Xu S."/>
            <person name="Levy A."/>
            <person name="Lightman S.L."/>
        </authorList>
    </citation>
    <scope>NUCLEOTIDE SEQUENCE [MRNA]</scope>
    <source>
        <strain>Wistar</strain>
        <tissue>Pituitary</tissue>
    </source>
</reference>
<reference key="3">
    <citation type="journal article" date="1997" name="Arterioscler. Thromb. Vasc. Biol.">
        <title>Overexpression of P2Y2 purinoceptor in intimal lesions of the rat aorta.</title>
        <authorList>
            <person name="Seye C.I."/>
            <person name="Gadeau A.P."/>
            <person name="Daret D."/>
            <person name="Dupuch F."/>
            <person name="Alzieu P."/>
            <person name="Capron L."/>
            <person name="Desgranges C."/>
        </authorList>
    </citation>
    <scope>NUCLEOTIDE SEQUENCE [MRNA]</scope>
    <source>
        <strain>Wistar</strain>
    </source>
</reference>
<reference key="4">
    <citation type="journal article" date="2004" name="Genome Res.">
        <title>The status, quality, and expansion of the NIH full-length cDNA project: the Mammalian Gene Collection (MGC).</title>
        <authorList>
            <consortium name="The MGC Project Team"/>
        </authorList>
    </citation>
    <scope>NUCLEOTIDE SEQUENCE [LARGE SCALE MRNA]</scope>
    <source>
        <tissue>Prostate</tissue>
    </source>
</reference>